<keyword id="KW-0521">NADP</keyword>
<keyword id="KW-0560">Oxidoreductase</keyword>
<keyword id="KW-0627">Porphyrin biosynthesis</keyword>
<keyword id="KW-1185">Reference proteome</keyword>
<proteinExistence type="inferred from homology"/>
<feature type="chain" id="PRO_0000114054" description="Glutamyl-tRNA reductase">
    <location>
        <begin position="1"/>
        <end position="420"/>
    </location>
</feature>
<feature type="active site" description="Nucleophile" evidence="1">
    <location>
        <position position="50"/>
    </location>
</feature>
<feature type="binding site" evidence="1">
    <location>
        <begin position="49"/>
        <end position="52"/>
    </location>
    <ligand>
        <name>substrate</name>
    </ligand>
</feature>
<feature type="binding site" evidence="1">
    <location>
        <position position="107"/>
    </location>
    <ligand>
        <name>substrate</name>
    </ligand>
</feature>
<feature type="binding site" evidence="1">
    <location>
        <begin position="112"/>
        <end position="114"/>
    </location>
    <ligand>
        <name>substrate</name>
    </ligand>
</feature>
<feature type="binding site" evidence="1">
    <location>
        <position position="118"/>
    </location>
    <ligand>
        <name>substrate</name>
    </ligand>
</feature>
<feature type="binding site" evidence="1">
    <location>
        <begin position="187"/>
        <end position="192"/>
    </location>
    <ligand>
        <name>NADP(+)</name>
        <dbReference type="ChEBI" id="CHEBI:58349"/>
    </ligand>
</feature>
<feature type="site" description="Important for activity" evidence="1">
    <location>
        <position position="97"/>
    </location>
</feature>
<reference key="1">
    <citation type="journal article" date="2005" name="Science">
        <title>Life at depth: Photobacterium profundum genome sequence and expression analysis.</title>
        <authorList>
            <person name="Vezzi A."/>
            <person name="Campanaro S."/>
            <person name="D'Angelo M."/>
            <person name="Simonato F."/>
            <person name="Vitulo N."/>
            <person name="Lauro F.M."/>
            <person name="Cestaro A."/>
            <person name="Malacrida G."/>
            <person name="Simionati B."/>
            <person name="Cannata N."/>
            <person name="Romualdi C."/>
            <person name="Bartlett D.H."/>
            <person name="Valle G."/>
        </authorList>
    </citation>
    <scope>NUCLEOTIDE SEQUENCE [LARGE SCALE GENOMIC DNA]</scope>
    <source>
        <strain>ATCC BAA-1253 / SS9</strain>
    </source>
</reference>
<evidence type="ECO:0000255" key="1">
    <source>
        <dbReference type="HAMAP-Rule" id="MF_00087"/>
    </source>
</evidence>
<name>HEM1_PHOPR</name>
<dbReference type="EC" id="1.2.1.70" evidence="1"/>
<dbReference type="EMBL" id="CR378672">
    <property type="protein sequence ID" value="CAG21213.1"/>
    <property type="molecule type" value="Genomic_DNA"/>
</dbReference>
<dbReference type="RefSeq" id="WP_011219485.1">
    <property type="nucleotide sequence ID" value="NC_006370.1"/>
</dbReference>
<dbReference type="SMR" id="Q6LNB3"/>
<dbReference type="STRING" id="298386.PBPRA2846"/>
<dbReference type="KEGG" id="ppr:PBPRA2846"/>
<dbReference type="eggNOG" id="COG0373">
    <property type="taxonomic scope" value="Bacteria"/>
</dbReference>
<dbReference type="HOGENOM" id="CLU_035113_2_2_6"/>
<dbReference type="UniPathway" id="UPA00251">
    <property type="reaction ID" value="UER00316"/>
</dbReference>
<dbReference type="Proteomes" id="UP000000593">
    <property type="component" value="Chromosome 1"/>
</dbReference>
<dbReference type="GO" id="GO:0008883">
    <property type="term" value="F:glutamyl-tRNA reductase activity"/>
    <property type="evidence" value="ECO:0007669"/>
    <property type="project" value="UniProtKB-UniRule"/>
</dbReference>
<dbReference type="GO" id="GO:0050661">
    <property type="term" value="F:NADP binding"/>
    <property type="evidence" value="ECO:0007669"/>
    <property type="project" value="InterPro"/>
</dbReference>
<dbReference type="GO" id="GO:0019353">
    <property type="term" value="P:protoporphyrinogen IX biosynthetic process from glutamate"/>
    <property type="evidence" value="ECO:0007669"/>
    <property type="project" value="TreeGrafter"/>
</dbReference>
<dbReference type="CDD" id="cd05213">
    <property type="entry name" value="NAD_bind_Glutamyl_tRNA_reduct"/>
    <property type="match status" value="1"/>
</dbReference>
<dbReference type="FunFam" id="3.30.460.30:FF:000001">
    <property type="entry name" value="Glutamyl-tRNA reductase"/>
    <property type="match status" value="1"/>
</dbReference>
<dbReference type="FunFam" id="3.40.50.720:FF:000031">
    <property type="entry name" value="Glutamyl-tRNA reductase"/>
    <property type="match status" value="1"/>
</dbReference>
<dbReference type="Gene3D" id="3.30.460.30">
    <property type="entry name" value="Glutamyl-tRNA reductase, N-terminal domain"/>
    <property type="match status" value="1"/>
</dbReference>
<dbReference type="Gene3D" id="3.40.50.720">
    <property type="entry name" value="NAD(P)-binding Rossmann-like Domain"/>
    <property type="match status" value="1"/>
</dbReference>
<dbReference type="HAMAP" id="MF_00087">
    <property type="entry name" value="Glu_tRNA_reductase"/>
    <property type="match status" value="1"/>
</dbReference>
<dbReference type="InterPro" id="IPR000343">
    <property type="entry name" value="4pyrrol_synth_GluRdtase"/>
</dbReference>
<dbReference type="InterPro" id="IPR015896">
    <property type="entry name" value="4pyrrol_synth_GluRdtase_dimer"/>
</dbReference>
<dbReference type="InterPro" id="IPR015895">
    <property type="entry name" value="4pyrrol_synth_GluRdtase_N"/>
</dbReference>
<dbReference type="InterPro" id="IPR018214">
    <property type="entry name" value="GluRdtase_CS"/>
</dbReference>
<dbReference type="InterPro" id="IPR036453">
    <property type="entry name" value="GluRdtase_dimer_dom_sf"/>
</dbReference>
<dbReference type="InterPro" id="IPR036343">
    <property type="entry name" value="GluRdtase_N_sf"/>
</dbReference>
<dbReference type="InterPro" id="IPR036291">
    <property type="entry name" value="NAD(P)-bd_dom_sf"/>
</dbReference>
<dbReference type="InterPro" id="IPR006151">
    <property type="entry name" value="Shikm_DH/Glu-tRNA_Rdtase"/>
</dbReference>
<dbReference type="NCBIfam" id="TIGR01035">
    <property type="entry name" value="hemA"/>
    <property type="match status" value="1"/>
</dbReference>
<dbReference type="PANTHER" id="PTHR43013">
    <property type="entry name" value="GLUTAMYL-TRNA REDUCTASE"/>
    <property type="match status" value="1"/>
</dbReference>
<dbReference type="PANTHER" id="PTHR43013:SF1">
    <property type="entry name" value="GLUTAMYL-TRNA REDUCTASE"/>
    <property type="match status" value="1"/>
</dbReference>
<dbReference type="Pfam" id="PF00745">
    <property type="entry name" value="GlutR_dimer"/>
    <property type="match status" value="1"/>
</dbReference>
<dbReference type="Pfam" id="PF05201">
    <property type="entry name" value="GlutR_N"/>
    <property type="match status" value="1"/>
</dbReference>
<dbReference type="Pfam" id="PF01488">
    <property type="entry name" value="Shikimate_DH"/>
    <property type="match status" value="1"/>
</dbReference>
<dbReference type="PIRSF" id="PIRSF000445">
    <property type="entry name" value="4pyrrol_synth_GluRdtase"/>
    <property type="match status" value="1"/>
</dbReference>
<dbReference type="SUPFAM" id="SSF69742">
    <property type="entry name" value="Glutamyl tRNA-reductase catalytic, N-terminal domain"/>
    <property type="match status" value="1"/>
</dbReference>
<dbReference type="SUPFAM" id="SSF69075">
    <property type="entry name" value="Glutamyl tRNA-reductase dimerization domain"/>
    <property type="match status" value="1"/>
</dbReference>
<dbReference type="SUPFAM" id="SSF51735">
    <property type="entry name" value="NAD(P)-binding Rossmann-fold domains"/>
    <property type="match status" value="1"/>
</dbReference>
<dbReference type="PROSITE" id="PS00747">
    <property type="entry name" value="GLUTR"/>
    <property type="match status" value="1"/>
</dbReference>
<comment type="function">
    <text evidence="1">Catalyzes the NADPH-dependent reduction of glutamyl-tRNA(Glu) to glutamate 1-semialdehyde (GSA).</text>
</comment>
<comment type="catalytic activity">
    <reaction evidence="1">
        <text>(S)-4-amino-5-oxopentanoate + tRNA(Glu) + NADP(+) = L-glutamyl-tRNA(Glu) + NADPH + H(+)</text>
        <dbReference type="Rhea" id="RHEA:12344"/>
        <dbReference type="Rhea" id="RHEA-COMP:9663"/>
        <dbReference type="Rhea" id="RHEA-COMP:9680"/>
        <dbReference type="ChEBI" id="CHEBI:15378"/>
        <dbReference type="ChEBI" id="CHEBI:57501"/>
        <dbReference type="ChEBI" id="CHEBI:57783"/>
        <dbReference type="ChEBI" id="CHEBI:58349"/>
        <dbReference type="ChEBI" id="CHEBI:78442"/>
        <dbReference type="ChEBI" id="CHEBI:78520"/>
        <dbReference type="EC" id="1.2.1.70"/>
    </reaction>
</comment>
<comment type="pathway">
    <text evidence="1">Porphyrin-containing compound metabolism; protoporphyrin-IX biosynthesis; 5-aminolevulinate from L-glutamyl-tRNA(Glu): step 1/2.</text>
</comment>
<comment type="subunit">
    <text evidence="1">Homodimer.</text>
</comment>
<comment type="domain">
    <text evidence="1">Possesses an unusual extended V-shaped dimeric structure with each monomer consisting of three distinct domains arranged along a curved 'spinal' alpha-helix. The N-terminal catalytic domain specifically recognizes the glutamate moiety of the substrate. The second domain is the NADPH-binding domain, and the third C-terminal domain is responsible for dimerization.</text>
</comment>
<comment type="miscellaneous">
    <text evidence="1">During catalysis, the active site Cys acts as a nucleophile attacking the alpha-carbonyl group of tRNA-bound glutamate with the formation of a thioester intermediate between enzyme and glutamate, and the concomitant release of tRNA(Glu). The thioester intermediate is finally reduced by direct hydride transfer from NADPH, to form the product GSA.</text>
</comment>
<comment type="similarity">
    <text evidence="1">Belongs to the glutamyl-tRNA reductase family.</text>
</comment>
<protein>
    <recommendedName>
        <fullName evidence="1">Glutamyl-tRNA reductase</fullName>
        <shortName evidence="1">GluTR</shortName>
        <ecNumber evidence="1">1.2.1.70</ecNumber>
    </recommendedName>
</protein>
<organism>
    <name type="scientific">Photobacterium profundum (strain SS9)</name>
    <dbReference type="NCBI Taxonomy" id="298386"/>
    <lineage>
        <taxon>Bacteria</taxon>
        <taxon>Pseudomonadati</taxon>
        <taxon>Pseudomonadota</taxon>
        <taxon>Gammaproteobacteria</taxon>
        <taxon>Vibrionales</taxon>
        <taxon>Vibrionaceae</taxon>
        <taxon>Photobacterium</taxon>
    </lineage>
</organism>
<gene>
    <name evidence="1" type="primary">hemA</name>
    <name type="ordered locus">PBPRA2846</name>
</gene>
<sequence>MTLLALGINHNTASVDLREKVAFSPDKLKEALQQLESHPEVTSSIIVSTCNRTEVYCDVTHSGPGVMIDWLAKFHRLSAEEILPSLYFHEEQAAARHLMRVACGLDSLVLGEPQILGQVKQSYYSSQEYDAIHGTLEKLFHKTFTVAKRVRTETDIGGNAVSVAYAACTLAKQIFESLSDTTVLLVGAGETIELVSRHLVEQGCNKLIVANRTKERAANLAEEFGAEVIGLPEIPEHLHRADIVISSTASPLPIVGKGMVEKAIKARRHQPMLFVDIAVPRDVEAEVGDLNDVYLYTVDDLHSIIEKNREQRKVAAIQAEAIISEESAAFMSWLRSLEAVDSIRQYRCFADDIKNDMLSRSLQAIANGVAPEKVLVELSNKLTNKLIHAPTRAMQQAAHNGEPEKLSVIRETLGLDSIKD</sequence>
<accession>Q6LNB3</accession>